<feature type="signal peptide" evidence="3">
    <location>
        <begin position="1"/>
        <end position="21"/>
    </location>
</feature>
<feature type="propeptide" id="PRO_0000392946" evidence="5">
    <location>
        <begin position="22"/>
        <end position="34"/>
    </location>
</feature>
<feature type="chain" id="PRO_0000392947" description="Defensin" evidence="5">
    <location>
        <begin position="37"/>
        <end position="74"/>
    </location>
</feature>
<feature type="disulfide bond" evidence="1">
    <location>
        <begin position="40"/>
        <end position="61"/>
    </location>
</feature>
<feature type="disulfide bond" evidence="1">
    <location>
        <begin position="47"/>
        <end position="69"/>
    </location>
</feature>
<feature type="disulfide bond" evidence="1">
    <location>
        <begin position="51"/>
        <end position="71"/>
    </location>
</feature>
<evidence type="ECO:0000250" key="1">
    <source>
        <dbReference type="UniProtKB" id="I1T3C7"/>
    </source>
</evidence>
<evidence type="ECO:0000250" key="2">
    <source>
        <dbReference type="UniProtKB" id="Q86QI5"/>
    </source>
</evidence>
<evidence type="ECO:0000255" key="3"/>
<evidence type="ECO:0000255" key="4">
    <source>
        <dbReference type="PROSITE-ProRule" id="PRU00710"/>
    </source>
</evidence>
<evidence type="ECO:0000269" key="5">
    <source>
    </source>
</evidence>
<evidence type="ECO:0000303" key="6">
    <source>
    </source>
</evidence>
<evidence type="ECO:0000305" key="7"/>
<evidence type="ECO:0000312" key="8">
    <source>
        <dbReference type="EMBL" id="AAO48943.1"/>
    </source>
</evidence>
<protein>
    <recommendedName>
        <fullName evidence="6">Defensin</fullName>
    </recommendedName>
</protein>
<organism>
    <name type="scientific">Rhipicephalus microplus</name>
    <name type="common">Cattle tick</name>
    <name type="synonym">Boophilus microplus</name>
    <dbReference type="NCBI Taxonomy" id="6941"/>
    <lineage>
        <taxon>Eukaryota</taxon>
        <taxon>Metazoa</taxon>
        <taxon>Ecdysozoa</taxon>
        <taxon>Arthropoda</taxon>
        <taxon>Chelicerata</taxon>
        <taxon>Arachnida</taxon>
        <taxon>Acari</taxon>
        <taxon>Parasitiformes</taxon>
        <taxon>Ixodida</taxon>
        <taxon>Ixodoidea</taxon>
        <taxon>Ixodidae</taxon>
        <taxon>Rhipicephalinae</taxon>
        <taxon>Rhipicephalus</taxon>
        <taxon>Boophilus</taxon>
    </lineage>
</organism>
<proteinExistence type="evidence at protein level"/>
<name>DEFI_RHIMP</name>
<sequence>MRGIYICLVFVLVCGLVSGLADVPAESEMAHLRVRRGFGCPFNQGACHRHCRSIRRRGGYCAGLIKQTCTCYRN</sequence>
<dbReference type="EMBL" id="AY233213">
    <property type="protein sequence ID" value="AAO48943.1"/>
    <property type="molecule type" value="mRNA"/>
</dbReference>
<dbReference type="RefSeq" id="XP_037269264.1">
    <property type="nucleotide sequence ID" value="XM_037413367.1"/>
</dbReference>
<dbReference type="SMR" id="Q86LE4"/>
<dbReference type="EnsemblMetazoa" id="XM_037413367.1">
    <property type="protein sequence ID" value="XP_037269264.1"/>
    <property type="gene ID" value="LOC119161044"/>
</dbReference>
<dbReference type="GeneID" id="119161044"/>
<dbReference type="VEuPathDB" id="VectorBase:LOC119161044"/>
<dbReference type="OMA" id="IYICLVF"/>
<dbReference type="OrthoDB" id="6476875at2759"/>
<dbReference type="GO" id="GO:0005576">
    <property type="term" value="C:extracellular region"/>
    <property type="evidence" value="ECO:0000314"/>
    <property type="project" value="UniProtKB"/>
</dbReference>
<dbReference type="GO" id="GO:0050829">
    <property type="term" value="P:defense response to Gram-negative bacterium"/>
    <property type="evidence" value="ECO:0000250"/>
    <property type="project" value="UniProtKB"/>
</dbReference>
<dbReference type="GO" id="GO:0050830">
    <property type="term" value="P:defense response to Gram-positive bacterium"/>
    <property type="evidence" value="ECO:0000250"/>
    <property type="project" value="UniProtKB"/>
</dbReference>
<dbReference type="GO" id="GO:0045087">
    <property type="term" value="P:innate immune response"/>
    <property type="evidence" value="ECO:0007669"/>
    <property type="project" value="UniProtKB-KW"/>
</dbReference>
<dbReference type="FunFam" id="3.30.30.10:FF:000006">
    <property type="entry name" value="Defensin DFS2"/>
    <property type="match status" value="1"/>
</dbReference>
<dbReference type="Gene3D" id="3.30.30.10">
    <property type="entry name" value="Knottin, scorpion toxin-like"/>
    <property type="match status" value="1"/>
</dbReference>
<dbReference type="InterPro" id="IPR001542">
    <property type="entry name" value="Defensin_invertebrate/fungal"/>
</dbReference>
<dbReference type="InterPro" id="IPR036574">
    <property type="entry name" value="Scorpion_toxin-like_sf"/>
</dbReference>
<dbReference type="Pfam" id="PF01097">
    <property type="entry name" value="Defensin_2"/>
    <property type="match status" value="1"/>
</dbReference>
<dbReference type="SUPFAM" id="SSF57095">
    <property type="entry name" value="Scorpion toxin-like"/>
    <property type="match status" value="1"/>
</dbReference>
<dbReference type="PROSITE" id="PS51378">
    <property type="entry name" value="INVERT_DEFENSINS"/>
    <property type="match status" value="1"/>
</dbReference>
<reference evidence="7 8" key="1">
    <citation type="journal article" date="2004" name="Dev. Comp. Immunol.">
        <title>Cysteine-rich antimicrobial peptides of the cattle tick Boophilus microplus: isolation, structural characterization and tissue expression profile.</title>
        <authorList>
            <person name="Fogaca A.C."/>
            <person name="Lorenzini D.M."/>
            <person name="Kaku L.M."/>
            <person name="Esteves E."/>
            <person name="Bulet P."/>
            <person name="Daffre S."/>
        </authorList>
    </citation>
    <scope>NUCLEOTIDE SEQUENCE [MRNA]</scope>
    <scope>PROTEIN SEQUENCE OF 37-74</scope>
    <scope>SUBCELLULAR LOCATION</scope>
    <scope>TISSUE SPECIFICITY</scope>
    <scope>MASS SPECTROMETRY</scope>
    <source>
        <strain evidence="5">Porto Alegre</strain>
        <tissue evidence="5">Hemocyte</tissue>
    </source>
</reference>
<accession>Q86LE4</accession>
<keyword id="KW-0044">Antibiotic</keyword>
<keyword id="KW-0929">Antimicrobial</keyword>
<keyword id="KW-0165">Cleavage on pair of basic residues</keyword>
<keyword id="KW-0211">Defensin</keyword>
<keyword id="KW-0903">Direct protein sequencing</keyword>
<keyword id="KW-1015">Disulfide bond</keyword>
<keyword id="KW-0391">Immunity</keyword>
<keyword id="KW-0399">Innate immunity</keyword>
<keyword id="KW-0964">Secreted</keyword>
<keyword id="KW-0732">Signal</keyword>
<comment type="function">
    <text evidence="2 4">Antibacterial peptide mostly active against Gram-positive bacteria.</text>
</comment>
<comment type="subcellular location">
    <subcellularLocation>
        <location evidence="5">Secreted</location>
    </subcellularLocation>
</comment>
<comment type="tissue specificity">
    <text evidence="5">Expressed in the hemocytes, fat body and ovaries.</text>
</comment>
<comment type="mass spectrometry"/>
<comment type="similarity">
    <text evidence="4">Belongs to the invertebrate defensin family. Type 2 subfamily.</text>
</comment>